<organism>
    <name type="scientific">Escherichia coli (strain ATCC 8739 / DSM 1576 / NBRC 3972 / NCIMB 8545 / WDCM 00012 / Crooks)</name>
    <dbReference type="NCBI Taxonomy" id="481805"/>
    <lineage>
        <taxon>Bacteria</taxon>
        <taxon>Pseudomonadati</taxon>
        <taxon>Pseudomonadota</taxon>
        <taxon>Gammaproteobacteria</taxon>
        <taxon>Enterobacterales</taxon>
        <taxon>Enterobacteriaceae</taxon>
        <taxon>Escherichia</taxon>
    </lineage>
</organism>
<dbReference type="EC" id="6.1.1.5" evidence="1"/>
<dbReference type="EMBL" id="CP000946">
    <property type="protein sequence ID" value="ACA79242.1"/>
    <property type="molecule type" value="Genomic_DNA"/>
</dbReference>
<dbReference type="RefSeq" id="WP_001286874.1">
    <property type="nucleotide sequence ID" value="NZ_MTFT01000035.1"/>
</dbReference>
<dbReference type="SMR" id="B1IRE9"/>
<dbReference type="KEGG" id="ecl:EcolC_3629"/>
<dbReference type="HOGENOM" id="CLU_001493_7_1_6"/>
<dbReference type="GO" id="GO:0005829">
    <property type="term" value="C:cytosol"/>
    <property type="evidence" value="ECO:0007669"/>
    <property type="project" value="TreeGrafter"/>
</dbReference>
<dbReference type="GO" id="GO:0002161">
    <property type="term" value="F:aminoacyl-tRNA deacylase activity"/>
    <property type="evidence" value="ECO:0007669"/>
    <property type="project" value="InterPro"/>
</dbReference>
<dbReference type="GO" id="GO:0005524">
    <property type="term" value="F:ATP binding"/>
    <property type="evidence" value="ECO:0007669"/>
    <property type="project" value="UniProtKB-UniRule"/>
</dbReference>
<dbReference type="GO" id="GO:0004822">
    <property type="term" value="F:isoleucine-tRNA ligase activity"/>
    <property type="evidence" value="ECO:0007669"/>
    <property type="project" value="UniProtKB-UniRule"/>
</dbReference>
<dbReference type="GO" id="GO:0000049">
    <property type="term" value="F:tRNA binding"/>
    <property type="evidence" value="ECO:0007669"/>
    <property type="project" value="InterPro"/>
</dbReference>
<dbReference type="GO" id="GO:0008270">
    <property type="term" value="F:zinc ion binding"/>
    <property type="evidence" value="ECO:0007669"/>
    <property type="project" value="UniProtKB-UniRule"/>
</dbReference>
<dbReference type="GO" id="GO:0006428">
    <property type="term" value="P:isoleucyl-tRNA aminoacylation"/>
    <property type="evidence" value="ECO:0007669"/>
    <property type="project" value="UniProtKB-UniRule"/>
</dbReference>
<dbReference type="CDD" id="cd07960">
    <property type="entry name" value="Anticodon_Ia_Ile_BEm"/>
    <property type="match status" value="1"/>
</dbReference>
<dbReference type="CDD" id="cd00818">
    <property type="entry name" value="IleRS_core"/>
    <property type="match status" value="1"/>
</dbReference>
<dbReference type="FunFam" id="1.10.730.20:FF:000001">
    <property type="entry name" value="Isoleucine--tRNA ligase"/>
    <property type="match status" value="1"/>
</dbReference>
<dbReference type="FunFam" id="3.40.50.620:FF:000042">
    <property type="entry name" value="Isoleucine--tRNA ligase"/>
    <property type="match status" value="1"/>
</dbReference>
<dbReference type="FunFam" id="3.40.50.620:FF:000048">
    <property type="entry name" value="Isoleucine--tRNA ligase"/>
    <property type="match status" value="1"/>
</dbReference>
<dbReference type="FunFam" id="3.90.740.10:FF:000002">
    <property type="entry name" value="Isoleucine--tRNA ligase"/>
    <property type="match status" value="1"/>
</dbReference>
<dbReference type="Gene3D" id="1.10.730.20">
    <property type="match status" value="1"/>
</dbReference>
<dbReference type="Gene3D" id="3.40.50.620">
    <property type="entry name" value="HUPs"/>
    <property type="match status" value="2"/>
</dbReference>
<dbReference type="Gene3D" id="3.90.740.10">
    <property type="entry name" value="Valyl/Leucyl/Isoleucyl-tRNA synthetase, editing domain"/>
    <property type="match status" value="1"/>
</dbReference>
<dbReference type="HAMAP" id="MF_02002">
    <property type="entry name" value="Ile_tRNA_synth_type1"/>
    <property type="match status" value="1"/>
</dbReference>
<dbReference type="InterPro" id="IPR001412">
    <property type="entry name" value="aa-tRNA-synth_I_CS"/>
</dbReference>
<dbReference type="InterPro" id="IPR002300">
    <property type="entry name" value="aa-tRNA-synth_Ia"/>
</dbReference>
<dbReference type="InterPro" id="IPR033708">
    <property type="entry name" value="Anticodon_Ile_BEm"/>
</dbReference>
<dbReference type="InterPro" id="IPR002301">
    <property type="entry name" value="Ile-tRNA-ligase"/>
</dbReference>
<dbReference type="InterPro" id="IPR023585">
    <property type="entry name" value="Ile-tRNA-ligase_type1"/>
</dbReference>
<dbReference type="InterPro" id="IPR050081">
    <property type="entry name" value="Ile-tRNA_ligase"/>
</dbReference>
<dbReference type="InterPro" id="IPR013155">
    <property type="entry name" value="M/V/L/I-tRNA-synth_anticd-bd"/>
</dbReference>
<dbReference type="InterPro" id="IPR014729">
    <property type="entry name" value="Rossmann-like_a/b/a_fold"/>
</dbReference>
<dbReference type="InterPro" id="IPR009080">
    <property type="entry name" value="tRNAsynth_Ia_anticodon-bd"/>
</dbReference>
<dbReference type="InterPro" id="IPR009008">
    <property type="entry name" value="Val/Leu/Ile-tRNA-synth_edit"/>
</dbReference>
<dbReference type="InterPro" id="IPR010663">
    <property type="entry name" value="Znf_FPG/IleRS"/>
</dbReference>
<dbReference type="NCBIfam" id="TIGR00392">
    <property type="entry name" value="ileS"/>
    <property type="match status" value="1"/>
</dbReference>
<dbReference type="PANTHER" id="PTHR42765:SF1">
    <property type="entry name" value="ISOLEUCINE--TRNA LIGASE, MITOCHONDRIAL"/>
    <property type="match status" value="1"/>
</dbReference>
<dbReference type="PANTHER" id="PTHR42765">
    <property type="entry name" value="SOLEUCYL-TRNA SYNTHETASE"/>
    <property type="match status" value="1"/>
</dbReference>
<dbReference type="Pfam" id="PF08264">
    <property type="entry name" value="Anticodon_1"/>
    <property type="match status" value="1"/>
</dbReference>
<dbReference type="Pfam" id="PF00133">
    <property type="entry name" value="tRNA-synt_1"/>
    <property type="match status" value="1"/>
</dbReference>
<dbReference type="Pfam" id="PF06827">
    <property type="entry name" value="zf-FPG_IleRS"/>
    <property type="match status" value="1"/>
</dbReference>
<dbReference type="PRINTS" id="PR00984">
    <property type="entry name" value="TRNASYNTHILE"/>
</dbReference>
<dbReference type="SUPFAM" id="SSF47323">
    <property type="entry name" value="Anticodon-binding domain of a subclass of class I aminoacyl-tRNA synthetases"/>
    <property type="match status" value="1"/>
</dbReference>
<dbReference type="SUPFAM" id="SSF52374">
    <property type="entry name" value="Nucleotidylyl transferase"/>
    <property type="match status" value="1"/>
</dbReference>
<dbReference type="SUPFAM" id="SSF50677">
    <property type="entry name" value="ValRS/IleRS/LeuRS editing domain"/>
    <property type="match status" value="1"/>
</dbReference>
<dbReference type="PROSITE" id="PS00178">
    <property type="entry name" value="AA_TRNA_LIGASE_I"/>
    <property type="match status" value="1"/>
</dbReference>
<keyword id="KW-0007">Acetylation</keyword>
<keyword id="KW-0030">Aminoacyl-tRNA synthetase</keyword>
<keyword id="KW-0067">ATP-binding</keyword>
<keyword id="KW-0963">Cytoplasm</keyword>
<keyword id="KW-0436">Ligase</keyword>
<keyword id="KW-0479">Metal-binding</keyword>
<keyword id="KW-0547">Nucleotide-binding</keyword>
<keyword id="KW-0648">Protein biosynthesis</keyword>
<keyword id="KW-0862">Zinc</keyword>
<name>SYI_ECOLC</name>
<proteinExistence type="inferred from homology"/>
<accession>B1IRE9</accession>
<evidence type="ECO:0000255" key="1">
    <source>
        <dbReference type="HAMAP-Rule" id="MF_02002"/>
    </source>
</evidence>
<protein>
    <recommendedName>
        <fullName evidence="1">Isoleucine--tRNA ligase</fullName>
        <ecNumber evidence="1">6.1.1.5</ecNumber>
    </recommendedName>
    <alternativeName>
        <fullName evidence="1">Isoleucyl-tRNA synthetase</fullName>
        <shortName evidence="1">IleRS</shortName>
    </alternativeName>
</protein>
<sequence length="938" mass="104308">MSDYKSTLNLPETGFPMRGDLAKREPGMLARWTDDDLYGIIRAAKKGKKTFILHDGPPYANGSIHIGHSVNKILKDIIVKSKGLSGYDSPYVPGWDCHGLPIELKVEQEYGKPGEKFTAAEFRAKCREYAATQVDGQRKDFIRLGVLGDWSHPYLTMDFKTEANIIRALGKIIGNGHLHKGAKPVHWCVDCRSALAEAEVEYYDKTSPSIDVAFQAVDQDALKAKFAVSNVNGPISLVIWTTTPWTLPANRAISIAPDFDYALVQIDGQAVILAKDLVESVMQRIGVTDYTILGTVKGAELELLRFTHPFMGFDVPAILGDHVTLDAGTGAVHTAPGHGPDDYVIGQKYGLETANPVGPDGTYLPGTYPTLDGVNVFKANDIVVALLQEKGALLHVEKMQHSYPCCWRHKTPIIFRATPQWFVSMDQKGLRAQSLKEIKGVQWIPDWGQARIESMVANRPDWCISRQRTWGVPMSLFVHKDTEELHPRTLELMEEVAKRVEVNGIQAWWDLDAKEILGDEADQYVKVPDTLDVWFDSGSTHSSVVDVRPEFAGHAADMYLEGSDQHRGWFMSSLMISTAMKGKAPYRQVLTHGFTVDGQGRKMSKSIGNTVSPQDVMNKLGADILRLWVASTDYTGEMAVSDEILKRAADSYRRIRNTARFLLANLNGFDPAKDMVKPEEMVVLDRWAVGCAKAAQEDILKAYEAYDFHEVVQRLMRFCSVEMGSFYLDIIKDRQYTAKADSVARRSCQTALYHIAEALVRWMAPILSFTADEVWGYLPGEREKYVFTGEWYEGLFGLADSEAMNDAFWDELLKVRGEVNKVIEQARADKKVGGSLEAAVTLYAEPELAAKLTALGDELRFVLLTSGATVADYNDAPADAQQSEVLKGLKVALSKAEGEKCPRCWHYTRDVGKVAEHAEICGRCVSNVAGDGEKRKFA</sequence>
<feature type="chain" id="PRO_1000088545" description="Isoleucine--tRNA ligase">
    <location>
        <begin position="1"/>
        <end position="938"/>
    </location>
</feature>
<feature type="short sequence motif" description="'HIGH' region">
    <location>
        <begin position="58"/>
        <end position="68"/>
    </location>
</feature>
<feature type="short sequence motif" description="'KMSKS' region">
    <location>
        <begin position="602"/>
        <end position="606"/>
    </location>
</feature>
<feature type="binding site" evidence="1">
    <location>
        <position position="561"/>
    </location>
    <ligand>
        <name>L-isoleucyl-5'-AMP</name>
        <dbReference type="ChEBI" id="CHEBI:178002"/>
    </ligand>
</feature>
<feature type="binding site" evidence="1">
    <location>
        <position position="605"/>
    </location>
    <ligand>
        <name>ATP</name>
        <dbReference type="ChEBI" id="CHEBI:30616"/>
    </ligand>
</feature>
<feature type="binding site" evidence="1">
    <location>
        <position position="901"/>
    </location>
    <ligand>
        <name>Zn(2+)</name>
        <dbReference type="ChEBI" id="CHEBI:29105"/>
    </ligand>
</feature>
<feature type="binding site" evidence="1">
    <location>
        <position position="904"/>
    </location>
    <ligand>
        <name>Zn(2+)</name>
        <dbReference type="ChEBI" id="CHEBI:29105"/>
    </ligand>
</feature>
<feature type="binding site" evidence="1">
    <location>
        <position position="921"/>
    </location>
    <ligand>
        <name>Zn(2+)</name>
        <dbReference type="ChEBI" id="CHEBI:29105"/>
    </ligand>
</feature>
<feature type="binding site" evidence="1">
    <location>
        <position position="924"/>
    </location>
    <ligand>
        <name>Zn(2+)</name>
        <dbReference type="ChEBI" id="CHEBI:29105"/>
    </ligand>
</feature>
<feature type="modified residue" description="N6-acetyllysine" evidence="1">
    <location>
        <position position="183"/>
    </location>
</feature>
<gene>
    <name evidence="1" type="primary">ileS</name>
    <name type="ordered locus">EcolC_3629</name>
</gene>
<comment type="function">
    <text evidence="1">Catalyzes the attachment of isoleucine to tRNA(Ile). As IleRS can inadvertently accommodate and process structurally similar amino acids such as valine, to avoid such errors it has two additional distinct tRNA(Ile)-dependent editing activities. One activity is designated as 'pretransfer' editing and involves the hydrolysis of activated Val-AMP. The other activity is designated 'posttransfer' editing and involves deacylation of mischarged Val-tRNA(Ile).</text>
</comment>
<comment type="catalytic activity">
    <reaction evidence="1">
        <text>tRNA(Ile) + L-isoleucine + ATP = L-isoleucyl-tRNA(Ile) + AMP + diphosphate</text>
        <dbReference type="Rhea" id="RHEA:11060"/>
        <dbReference type="Rhea" id="RHEA-COMP:9666"/>
        <dbReference type="Rhea" id="RHEA-COMP:9695"/>
        <dbReference type="ChEBI" id="CHEBI:30616"/>
        <dbReference type="ChEBI" id="CHEBI:33019"/>
        <dbReference type="ChEBI" id="CHEBI:58045"/>
        <dbReference type="ChEBI" id="CHEBI:78442"/>
        <dbReference type="ChEBI" id="CHEBI:78528"/>
        <dbReference type="ChEBI" id="CHEBI:456215"/>
        <dbReference type="EC" id="6.1.1.5"/>
    </reaction>
</comment>
<comment type="cofactor">
    <cofactor evidence="1">
        <name>Zn(2+)</name>
        <dbReference type="ChEBI" id="CHEBI:29105"/>
    </cofactor>
    <text evidence="1">Binds 1 zinc ion per subunit.</text>
</comment>
<comment type="subunit">
    <text evidence="1">Monomer.</text>
</comment>
<comment type="subcellular location">
    <subcellularLocation>
        <location evidence="1">Cytoplasm</location>
    </subcellularLocation>
</comment>
<comment type="domain">
    <text evidence="1">IleRS has two distinct active sites: one for aminoacylation and one for editing. The misactivated valine is translocated from the active site to the editing site, which sterically excludes the correctly activated isoleucine. The single editing site contains two valyl binding pockets, one specific for each substrate (Val-AMP or Val-tRNA(Ile)).</text>
</comment>
<comment type="similarity">
    <text evidence="1">Belongs to the class-I aminoacyl-tRNA synthetase family. IleS type 1 subfamily.</text>
</comment>
<reference key="1">
    <citation type="submission" date="2008-02" db="EMBL/GenBank/DDBJ databases">
        <title>Complete sequence of Escherichia coli C str. ATCC 8739.</title>
        <authorList>
            <person name="Copeland A."/>
            <person name="Lucas S."/>
            <person name="Lapidus A."/>
            <person name="Glavina del Rio T."/>
            <person name="Dalin E."/>
            <person name="Tice H."/>
            <person name="Bruce D."/>
            <person name="Goodwin L."/>
            <person name="Pitluck S."/>
            <person name="Kiss H."/>
            <person name="Brettin T."/>
            <person name="Detter J.C."/>
            <person name="Han C."/>
            <person name="Kuske C.R."/>
            <person name="Schmutz J."/>
            <person name="Larimer F."/>
            <person name="Land M."/>
            <person name="Hauser L."/>
            <person name="Kyrpides N."/>
            <person name="Mikhailova N."/>
            <person name="Ingram L."/>
            <person name="Richardson P."/>
        </authorList>
    </citation>
    <scope>NUCLEOTIDE SEQUENCE [LARGE SCALE GENOMIC DNA]</scope>
    <source>
        <strain>ATCC 8739 / DSM 1576 / NBRC 3972 / NCIMB 8545 / WDCM 00012 / Crooks</strain>
    </source>
</reference>